<protein>
    <recommendedName>
        <fullName evidence="1">Ribosome-binding factor A</fullName>
    </recommendedName>
</protein>
<dbReference type="EMBL" id="AP009044">
    <property type="protein sequence ID" value="BAF54807.1"/>
    <property type="molecule type" value="Genomic_DNA"/>
</dbReference>
<dbReference type="RefSeq" id="WP_003857490.1">
    <property type="nucleotide sequence ID" value="NC_009342.1"/>
</dbReference>
<dbReference type="SMR" id="A4QEZ1"/>
<dbReference type="KEGG" id="cgt:cgR_1813"/>
<dbReference type="HOGENOM" id="CLU_089475_0_0_11"/>
<dbReference type="PhylomeDB" id="A4QEZ1"/>
<dbReference type="Proteomes" id="UP000006698">
    <property type="component" value="Chromosome"/>
</dbReference>
<dbReference type="GO" id="GO:0005829">
    <property type="term" value="C:cytosol"/>
    <property type="evidence" value="ECO:0007669"/>
    <property type="project" value="TreeGrafter"/>
</dbReference>
<dbReference type="GO" id="GO:0043024">
    <property type="term" value="F:ribosomal small subunit binding"/>
    <property type="evidence" value="ECO:0007669"/>
    <property type="project" value="TreeGrafter"/>
</dbReference>
<dbReference type="GO" id="GO:0030490">
    <property type="term" value="P:maturation of SSU-rRNA"/>
    <property type="evidence" value="ECO:0007669"/>
    <property type="project" value="UniProtKB-UniRule"/>
</dbReference>
<dbReference type="Gene3D" id="3.30.300.20">
    <property type="match status" value="1"/>
</dbReference>
<dbReference type="HAMAP" id="MF_00003">
    <property type="entry name" value="RbfA"/>
    <property type="match status" value="1"/>
</dbReference>
<dbReference type="InterPro" id="IPR015946">
    <property type="entry name" value="KH_dom-like_a/b"/>
</dbReference>
<dbReference type="InterPro" id="IPR000238">
    <property type="entry name" value="RbfA"/>
</dbReference>
<dbReference type="InterPro" id="IPR023799">
    <property type="entry name" value="RbfA_dom_sf"/>
</dbReference>
<dbReference type="InterPro" id="IPR020053">
    <property type="entry name" value="Ribosome-bd_factorA_CS"/>
</dbReference>
<dbReference type="NCBIfam" id="TIGR00082">
    <property type="entry name" value="rbfA"/>
    <property type="match status" value="1"/>
</dbReference>
<dbReference type="PANTHER" id="PTHR33515">
    <property type="entry name" value="RIBOSOME-BINDING FACTOR A, CHLOROPLASTIC-RELATED"/>
    <property type="match status" value="1"/>
</dbReference>
<dbReference type="PANTHER" id="PTHR33515:SF1">
    <property type="entry name" value="RIBOSOME-BINDING FACTOR A, CHLOROPLASTIC-RELATED"/>
    <property type="match status" value="1"/>
</dbReference>
<dbReference type="Pfam" id="PF02033">
    <property type="entry name" value="RBFA"/>
    <property type="match status" value="1"/>
</dbReference>
<dbReference type="SUPFAM" id="SSF89919">
    <property type="entry name" value="Ribosome-binding factor A, RbfA"/>
    <property type="match status" value="1"/>
</dbReference>
<dbReference type="PROSITE" id="PS01319">
    <property type="entry name" value="RBFA"/>
    <property type="match status" value="1"/>
</dbReference>
<sequence length="149" mass="16498">MADNARAARMAKRIQTIVASAIERDIKDRRLEFVTITDVTMTGDLHDAKVFYTVRGASIEEEPDLEAAAEALHRARGQLRKIVGQQLGVRFTPTLTYSIDTVPEASAHMEALLDRARKRDEELAKLREGAVPAGDADPYKTSSKSESEE</sequence>
<keyword id="KW-0963">Cytoplasm</keyword>
<keyword id="KW-0690">Ribosome biogenesis</keyword>
<proteinExistence type="inferred from homology"/>
<name>RBFA_CORGB</name>
<evidence type="ECO:0000255" key="1">
    <source>
        <dbReference type="HAMAP-Rule" id="MF_00003"/>
    </source>
</evidence>
<evidence type="ECO:0000256" key="2">
    <source>
        <dbReference type="SAM" id="MobiDB-lite"/>
    </source>
</evidence>
<comment type="function">
    <text evidence="1">One of several proteins that assist in the late maturation steps of the functional core of the 30S ribosomal subunit. Associates with free 30S ribosomal subunits (but not with 30S subunits that are part of 70S ribosomes or polysomes). Required for efficient processing of 16S rRNA. May interact with the 5'-terminal helix region of 16S rRNA.</text>
</comment>
<comment type="subunit">
    <text evidence="1">Monomer. Binds 30S ribosomal subunits, but not 50S ribosomal subunits or 70S ribosomes.</text>
</comment>
<comment type="subcellular location">
    <subcellularLocation>
        <location evidence="1">Cytoplasm</location>
    </subcellularLocation>
</comment>
<comment type="similarity">
    <text evidence="1">Belongs to the RbfA family.</text>
</comment>
<reference key="1">
    <citation type="journal article" date="2007" name="Microbiology">
        <title>Comparative analysis of the Corynebacterium glutamicum group and complete genome sequence of strain R.</title>
        <authorList>
            <person name="Yukawa H."/>
            <person name="Omumasaba C.A."/>
            <person name="Nonaka H."/>
            <person name="Kos P."/>
            <person name="Okai N."/>
            <person name="Suzuki N."/>
            <person name="Suda M."/>
            <person name="Tsuge Y."/>
            <person name="Watanabe J."/>
            <person name="Ikeda Y."/>
            <person name="Vertes A.A."/>
            <person name="Inui M."/>
        </authorList>
    </citation>
    <scope>NUCLEOTIDE SEQUENCE [LARGE SCALE GENOMIC DNA]</scope>
    <source>
        <strain>R</strain>
    </source>
</reference>
<gene>
    <name evidence="1" type="primary">rbfA</name>
    <name type="ordered locus">cgR_1813</name>
</gene>
<feature type="chain" id="PRO_1000000101" description="Ribosome-binding factor A">
    <location>
        <begin position="1"/>
        <end position="149"/>
    </location>
</feature>
<feature type="region of interest" description="Disordered" evidence="2">
    <location>
        <begin position="124"/>
        <end position="149"/>
    </location>
</feature>
<organism>
    <name type="scientific">Corynebacterium glutamicum (strain R)</name>
    <dbReference type="NCBI Taxonomy" id="340322"/>
    <lineage>
        <taxon>Bacteria</taxon>
        <taxon>Bacillati</taxon>
        <taxon>Actinomycetota</taxon>
        <taxon>Actinomycetes</taxon>
        <taxon>Mycobacteriales</taxon>
        <taxon>Corynebacteriaceae</taxon>
        <taxon>Corynebacterium</taxon>
    </lineage>
</organism>
<accession>A4QEZ1</accession>